<comment type="function">
    <text evidence="1">This protein specifically catalyzes the removal of signal peptides from prolipoproteins.</text>
</comment>
<comment type="catalytic activity">
    <reaction evidence="1">
        <text>Release of signal peptides from bacterial membrane prolipoproteins. Hydrolyzes -Xaa-Yaa-Zaa-|-(S,diacylglyceryl)Cys-, in which Xaa is hydrophobic (preferably Leu), and Yaa (Ala or Ser) and Zaa (Gly or Ala) have small, neutral side chains.</text>
        <dbReference type="EC" id="3.4.23.36"/>
    </reaction>
</comment>
<comment type="pathway">
    <text evidence="1">Protein modification; lipoprotein biosynthesis (signal peptide cleavage).</text>
</comment>
<comment type="subcellular location">
    <subcellularLocation>
        <location evidence="1">Cell membrane</location>
        <topology evidence="1">Multi-pass membrane protein</topology>
    </subcellularLocation>
</comment>
<comment type="similarity">
    <text evidence="1">Belongs to the peptidase A8 family.</text>
</comment>
<reference key="1">
    <citation type="submission" date="2003-10" db="EMBL/GenBank/DDBJ databases">
        <title>The complete genome sequence of the alkaliphilic Bacillus clausii KSM-K16.</title>
        <authorList>
            <person name="Takaki Y."/>
            <person name="Kageyama Y."/>
            <person name="Shimamura S."/>
            <person name="Suzuki H."/>
            <person name="Nishi S."/>
            <person name="Hatada Y."/>
            <person name="Kawai S."/>
            <person name="Ito S."/>
            <person name="Horikoshi K."/>
        </authorList>
    </citation>
    <scope>NUCLEOTIDE SEQUENCE [LARGE SCALE GENOMIC DNA]</scope>
    <source>
        <strain>KSM-K16</strain>
    </source>
</reference>
<evidence type="ECO:0000255" key="1">
    <source>
        <dbReference type="HAMAP-Rule" id="MF_00161"/>
    </source>
</evidence>
<organism>
    <name type="scientific">Shouchella clausii (strain KSM-K16)</name>
    <name type="common">Alkalihalobacillus clausii</name>
    <dbReference type="NCBI Taxonomy" id="66692"/>
    <lineage>
        <taxon>Bacteria</taxon>
        <taxon>Bacillati</taxon>
        <taxon>Bacillota</taxon>
        <taxon>Bacilli</taxon>
        <taxon>Bacillales</taxon>
        <taxon>Bacillaceae</taxon>
        <taxon>Shouchella</taxon>
    </lineage>
</organism>
<feature type="chain" id="PRO_1000123486" description="Lipoprotein signal peptidase">
    <location>
        <begin position="1"/>
        <end position="151"/>
    </location>
</feature>
<feature type="transmembrane region" description="Helical" evidence="1">
    <location>
        <begin position="54"/>
        <end position="74"/>
    </location>
</feature>
<feature type="transmembrane region" description="Helical" evidence="1">
    <location>
        <begin position="83"/>
        <end position="103"/>
    </location>
</feature>
<feature type="transmembrane region" description="Helical" evidence="1">
    <location>
        <begin position="120"/>
        <end position="140"/>
    </location>
</feature>
<feature type="active site" evidence="1">
    <location>
        <position position="110"/>
    </location>
</feature>
<feature type="active site" evidence="1">
    <location>
        <position position="125"/>
    </location>
</feature>
<name>LSPA_SHOC1</name>
<keyword id="KW-0064">Aspartyl protease</keyword>
<keyword id="KW-1003">Cell membrane</keyword>
<keyword id="KW-0378">Hydrolase</keyword>
<keyword id="KW-0472">Membrane</keyword>
<keyword id="KW-0645">Protease</keyword>
<keyword id="KW-1185">Reference proteome</keyword>
<keyword id="KW-0812">Transmembrane</keyword>
<keyword id="KW-1133">Transmembrane helix</keyword>
<accession>Q5WFI5</accession>
<proteinExistence type="inferred from homology"/>
<gene>
    <name evidence="1" type="primary">lspA</name>
    <name type="ordered locus">ABC2340</name>
</gene>
<sequence>MAYIVALIIIALDQLTKWLVVTSMELGERIPIIDQVLYLYSHRNTGAAFGILQGQMWFFYVVTTIIVGVIIYLIQTEAKGNRLLKIALGLVLGGAIGNFIDRLLRQEVVDFIDTFGDFPIFNIADSALTIGVGLFLLNILIQGRNEKRSTR</sequence>
<dbReference type="EC" id="3.4.23.36" evidence="1"/>
<dbReference type="EMBL" id="AP006627">
    <property type="protein sequence ID" value="BAD64875.1"/>
    <property type="molecule type" value="Genomic_DNA"/>
</dbReference>
<dbReference type="RefSeq" id="WP_011247183.1">
    <property type="nucleotide sequence ID" value="NC_006582.1"/>
</dbReference>
<dbReference type="SMR" id="Q5WFI5"/>
<dbReference type="STRING" id="66692.ABC2340"/>
<dbReference type="KEGG" id="bcl:ABC2340"/>
<dbReference type="eggNOG" id="COG0597">
    <property type="taxonomic scope" value="Bacteria"/>
</dbReference>
<dbReference type="HOGENOM" id="CLU_083252_3_0_9"/>
<dbReference type="OrthoDB" id="9810259at2"/>
<dbReference type="UniPathway" id="UPA00665"/>
<dbReference type="Proteomes" id="UP000001168">
    <property type="component" value="Chromosome"/>
</dbReference>
<dbReference type="GO" id="GO:0005886">
    <property type="term" value="C:plasma membrane"/>
    <property type="evidence" value="ECO:0007669"/>
    <property type="project" value="UniProtKB-SubCell"/>
</dbReference>
<dbReference type="GO" id="GO:0004190">
    <property type="term" value="F:aspartic-type endopeptidase activity"/>
    <property type="evidence" value="ECO:0007669"/>
    <property type="project" value="UniProtKB-UniRule"/>
</dbReference>
<dbReference type="GO" id="GO:0006508">
    <property type="term" value="P:proteolysis"/>
    <property type="evidence" value="ECO:0007669"/>
    <property type="project" value="UniProtKB-KW"/>
</dbReference>
<dbReference type="HAMAP" id="MF_00161">
    <property type="entry name" value="LspA"/>
    <property type="match status" value="1"/>
</dbReference>
<dbReference type="InterPro" id="IPR001872">
    <property type="entry name" value="Peptidase_A8"/>
</dbReference>
<dbReference type="NCBIfam" id="TIGR00077">
    <property type="entry name" value="lspA"/>
    <property type="match status" value="1"/>
</dbReference>
<dbReference type="PANTHER" id="PTHR33695">
    <property type="entry name" value="LIPOPROTEIN SIGNAL PEPTIDASE"/>
    <property type="match status" value="1"/>
</dbReference>
<dbReference type="PANTHER" id="PTHR33695:SF1">
    <property type="entry name" value="LIPOPROTEIN SIGNAL PEPTIDASE"/>
    <property type="match status" value="1"/>
</dbReference>
<dbReference type="Pfam" id="PF01252">
    <property type="entry name" value="Peptidase_A8"/>
    <property type="match status" value="1"/>
</dbReference>
<dbReference type="PRINTS" id="PR00781">
    <property type="entry name" value="LIPOSIGPTASE"/>
</dbReference>
<dbReference type="PROSITE" id="PS00855">
    <property type="entry name" value="SPASE_II"/>
    <property type="match status" value="1"/>
</dbReference>
<protein>
    <recommendedName>
        <fullName evidence="1">Lipoprotein signal peptidase</fullName>
        <ecNumber evidence="1">3.4.23.36</ecNumber>
    </recommendedName>
    <alternativeName>
        <fullName evidence="1">Prolipoprotein signal peptidase</fullName>
    </alternativeName>
    <alternativeName>
        <fullName evidence="1">Signal peptidase II</fullName>
        <shortName evidence="1">SPase II</shortName>
    </alternativeName>
</protein>